<reference key="1">
    <citation type="journal article" date="1997" name="Mol. Cell. Biol.">
        <title>PHR2 of Candida albicans encodes a functional homolog of the pH-regulated gene PHR1 with an inverted pattern of pH-dependent expression.</title>
        <authorList>
            <person name="Muehlschlegel F.A."/>
            <person name="Fonzi W.A."/>
        </authorList>
    </citation>
    <scope>NUCLEOTIDE SEQUENCE [GENOMIC DNA]</scope>
    <source>
        <strain>SC5314 / ATCC MYA-2876</strain>
    </source>
</reference>
<reference key="2">
    <citation type="journal article" date="2004" name="Proc. Natl. Acad. Sci. U.S.A.">
        <title>The diploid genome sequence of Candida albicans.</title>
        <authorList>
            <person name="Jones T."/>
            <person name="Federspiel N.A."/>
            <person name="Chibana H."/>
            <person name="Dungan J."/>
            <person name="Kalman S."/>
            <person name="Magee B.B."/>
            <person name="Newport G."/>
            <person name="Thorstenson Y.R."/>
            <person name="Agabian N."/>
            <person name="Magee P.T."/>
            <person name="Davis R.W."/>
            <person name="Scherer S."/>
        </authorList>
    </citation>
    <scope>NUCLEOTIDE SEQUENCE [LARGE SCALE GENOMIC DNA]</scope>
    <source>
        <strain>SC5314 / ATCC MYA-2876</strain>
    </source>
</reference>
<reference key="3">
    <citation type="journal article" date="2007" name="Genome Biol.">
        <title>Assembly of the Candida albicans genome into sixteen supercontigs aligned on the eight chromosomes.</title>
        <authorList>
            <person name="van het Hoog M."/>
            <person name="Rast T.J."/>
            <person name="Martchenko M."/>
            <person name="Grindle S."/>
            <person name="Dignard D."/>
            <person name="Hogues H."/>
            <person name="Cuomo C."/>
            <person name="Berriman M."/>
            <person name="Scherer S."/>
            <person name="Magee B.B."/>
            <person name="Whiteway M."/>
            <person name="Chibana H."/>
            <person name="Nantel A."/>
            <person name="Magee P.T."/>
        </authorList>
    </citation>
    <scope>GENOME REANNOTATION</scope>
    <source>
        <strain>SC5314 / ATCC MYA-2876</strain>
    </source>
</reference>
<reference key="4">
    <citation type="journal article" date="2013" name="Genome Biol.">
        <title>Assembly of a phased diploid Candida albicans genome facilitates allele-specific measurements and provides a simple model for repeat and indel structure.</title>
        <authorList>
            <person name="Muzzey D."/>
            <person name="Schwartz K."/>
            <person name="Weissman J.S."/>
            <person name="Sherlock G."/>
        </authorList>
    </citation>
    <scope>NUCLEOTIDE SEQUENCE [LARGE SCALE GENOMIC DNA]</scope>
    <scope>GENOME REANNOTATION</scope>
    <source>
        <strain>SC5314 / ATCC MYA-2876</strain>
    </source>
</reference>
<comment type="function">
    <text evidence="1">Required for apical cell growth and plays an essential role in morphogenesis. May be integral to the pathogenic ability of the organism (By similarity).</text>
</comment>
<comment type="subcellular location">
    <subcellularLocation>
        <location evidence="5">Cell membrane</location>
        <topology evidence="5">Lipid-anchor</topology>
        <topology evidence="5">GPI-anchor</topology>
    </subcellularLocation>
</comment>
<comment type="induction">
    <text>Repressed at pH values above 6 and progressively induced at more acidic pH values.</text>
</comment>
<comment type="similarity">
    <text evidence="5">Belongs to the glycosyl hydrolase 72 family.</text>
</comment>
<accession>O13318</accession>
<accession>A0A1D8PC54</accession>
<accession>Q5AB91</accession>
<organism>
    <name type="scientific">Candida albicans (strain SC5314 / ATCC MYA-2876)</name>
    <name type="common">Yeast</name>
    <dbReference type="NCBI Taxonomy" id="237561"/>
    <lineage>
        <taxon>Eukaryota</taxon>
        <taxon>Fungi</taxon>
        <taxon>Dikarya</taxon>
        <taxon>Ascomycota</taxon>
        <taxon>Saccharomycotina</taxon>
        <taxon>Pichiomycetes</taxon>
        <taxon>Debaryomycetaceae</taxon>
        <taxon>Candida/Lodderomyces clade</taxon>
        <taxon>Candida</taxon>
    </lineage>
</organism>
<protein>
    <recommendedName>
        <fullName>pH-responsive protein 2</fullName>
    </recommendedName>
    <alternativeName>
        <fullName>pH-regulated protein 2</fullName>
    </alternativeName>
</protein>
<feature type="signal peptide" evidence="3">
    <location>
        <begin position="1"/>
        <end position="22"/>
    </location>
</feature>
<feature type="chain" id="PRO_0000010485" description="pH-responsive protein 2">
    <location>
        <begin position="23"/>
        <end position="515"/>
    </location>
</feature>
<feature type="propeptide" id="PRO_0000010486" description="Removed in mature form" evidence="3">
    <location>
        <begin position="516"/>
        <end position="544"/>
    </location>
</feature>
<feature type="region of interest" description="Disordered" evidence="4">
    <location>
        <begin position="469"/>
        <end position="514"/>
    </location>
</feature>
<feature type="lipid moiety-binding region" description="GPI-anchor amidated serine" evidence="3">
    <location>
        <position position="515"/>
    </location>
</feature>
<feature type="glycosylation site" description="N-linked (GlcNAc...) asparagine" evidence="3">
    <location>
        <position position="40"/>
    </location>
</feature>
<feature type="glycosylation site" description="N-linked (GlcNAc...) asparagine" evidence="3">
    <location>
        <position position="59"/>
    </location>
</feature>
<feature type="glycosylation site" description="N-linked (GlcNAc...) asparagine" evidence="3">
    <location>
        <position position="147"/>
    </location>
</feature>
<feature type="glycosylation site" description="N-linked (GlcNAc...) asparagine" evidence="3">
    <location>
        <position position="408"/>
    </location>
</feature>
<feature type="disulfide bond" evidence="2">
    <location>
        <begin position="72"/>
        <end position="101"/>
    </location>
</feature>
<feature type="disulfide bond" evidence="2">
    <location>
        <begin position="214"/>
        <end position="347"/>
    </location>
</feature>
<feature type="disulfide bond" evidence="2">
    <location>
        <begin position="232"/>
        <end position="263"/>
    </location>
</feature>
<feature type="disulfide bond" evidence="2">
    <location>
        <begin position="369"/>
        <end position="420"/>
    </location>
</feature>
<feature type="disulfide bond" evidence="2">
    <location>
        <begin position="378"/>
        <end position="444"/>
    </location>
</feature>
<feature type="disulfide bond" evidence="2">
    <location>
        <begin position="397"/>
        <end position="402"/>
    </location>
</feature>
<feature type="sequence conflict" description="In Ref. 1; AAB80716." evidence="5" ref="1">
    <original>T</original>
    <variation>YDS</variation>
    <location>
        <position position="84"/>
    </location>
</feature>
<proteinExistence type="evidence at transcript level"/>
<keyword id="KW-1003">Cell membrane</keyword>
<keyword id="KW-1015">Disulfide bond</keyword>
<keyword id="KW-0325">Glycoprotein</keyword>
<keyword id="KW-0336">GPI-anchor</keyword>
<keyword id="KW-0449">Lipoprotein</keyword>
<keyword id="KW-0472">Membrane</keyword>
<keyword id="KW-1185">Reference proteome</keyword>
<keyword id="KW-0732">Signal</keyword>
<evidence type="ECO:0000250" key="1"/>
<evidence type="ECO:0000250" key="2">
    <source>
        <dbReference type="UniProtKB" id="Q06135"/>
    </source>
</evidence>
<evidence type="ECO:0000255" key="3"/>
<evidence type="ECO:0000256" key="4">
    <source>
        <dbReference type="SAM" id="MobiDB-lite"/>
    </source>
</evidence>
<evidence type="ECO:0000305" key="5"/>
<sequence length="544" mass="58716">MLLKSLFPSILAATSFVSSVAAEDLPAIEIVGNKFFYSNNGSQFYIKGIAYQQNNLDSNESFVDPLANPEHCKRDIPYLEAVDTNVIRVYALDTSQDHTECMQMLQDAGIYVIADLSQPDESINRDDPSWDLDLFERYTSVVDLFHNYTNILGFFAGNEVTNKKSNTDASAFVKAAIRDTKAYIKSKGYRSIPVGYSANDDSAIRVSLADYFACGDEDEAADFFGINMYEWCGDSSYKASGYESATNDYKNLGIPIFFSEYGCNEVRPRKFTEVATLFGDQMTPVWSGGIVYMYFEEENNYGLVSIKDNTVSTLKDYSYYSSEIKDIHPSSAKASAESASSISRTTCPTNTNNWEASTNLPPTPDKEVCECMSASLKCVVDDKVDSDDYSDLFSYICAKIDCDGINANGTTGEYGAYSPCHSKDKLSFVMNLYYEQNKESKSACDFGGSASLQSAKTASSCSAYLSSAGSSGLGTVSGTVRTDTSQSTSDSGSGSSSSSSSSSSSSSSGSSGSKSAASIVSVNLLTKIATIGISIVVGFGLITM</sequence>
<gene>
    <name type="primary">PHR2</name>
    <name type="ordered locus">CAALFM_C100220WA</name>
    <name type="ORF">CaO19.13500</name>
    <name type="ORF">CaO19.6081</name>
</gene>
<name>PHR2_CANAL</name>
<dbReference type="EMBL" id="AF011386">
    <property type="protein sequence ID" value="AAB80716.1"/>
    <property type="molecule type" value="Genomic_DNA"/>
</dbReference>
<dbReference type="EMBL" id="CP017623">
    <property type="protein sequence ID" value="AOW25724.1"/>
    <property type="molecule type" value="Genomic_DNA"/>
</dbReference>
<dbReference type="RefSeq" id="XP_719043.1">
    <property type="nucleotide sequence ID" value="XM_713950.1"/>
</dbReference>
<dbReference type="SMR" id="O13318"/>
<dbReference type="FunCoup" id="O13318">
    <property type="interactions" value="178"/>
</dbReference>
<dbReference type="STRING" id="237561.O13318"/>
<dbReference type="CAZy" id="CBM43">
    <property type="family name" value="Carbohydrate-Binding Module Family 43"/>
</dbReference>
<dbReference type="CAZy" id="GH72">
    <property type="family name" value="Glycoside Hydrolase Family 72"/>
</dbReference>
<dbReference type="GlyCosmos" id="O13318">
    <property type="glycosylation" value="4 sites, No reported glycans"/>
</dbReference>
<dbReference type="EnsemblFungi" id="C1_00220W_A-T">
    <property type="protein sequence ID" value="C1_00220W_A-T-p1"/>
    <property type="gene ID" value="C1_00220W_A"/>
</dbReference>
<dbReference type="GeneID" id="3639334"/>
<dbReference type="KEGG" id="cal:CAALFM_C100220WA"/>
<dbReference type="CGD" id="CAL0000181783">
    <property type="gene designation" value="PHR2"/>
</dbReference>
<dbReference type="VEuPathDB" id="FungiDB:C1_00220W_A"/>
<dbReference type="eggNOG" id="ENOG502QPST">
    <property type="taxonomic scope" value="Eukaryota"/>
</dbReference>
<dbReference type="HOGENOM" id="CLU_021855_2_1_1"/>
<dbReference type="InParanoid" id="O13318"/>
<dbReference type="OMA" id="QDHTECM"/>
<dbReference type="OrthoDB" id="421038at2759"/>
<dbReference type="PRO" id="PR:O13318"/>
<dbReference type="Proteomes" id="UP000000559">
    <property type="component" value="Chromosome 1"/>
</dbReference>
<dbReference type="GO" id="GO:0009986">
    <property type="term" value="C:cell surface"/>
    <property type="evidence" value="ECO:0000314"/>
    <property type="project" value="CGD"/>
</dbReference>
<dbReference type="GO" id="GO:1903561">
    <property type="term" value="C:extracellular vesicle"/>
    <property type="evidence" value="ECO:0000314"/>
    <property type="project" value="CGD"/>
</dbReference>
<dbReference type="GO" id="GO:0009277">
    <property type="term" value="C:fungal-type cell wall"/>
    <property type="evidence" value="ECO:0000314"/>
    <property type="project" value="CGD"/>
</dbReference>
<dbReference type="GO" id="GO:0030446">
    <property type="term" value="C:hyphal cell wall"/>
    <property type="evidence" value="ECO:0000314"/>
    <property type="project" value="CGD"/>
</dbReference>
<dbReference type="GO" id="GO:0005886">
    <property type="term" value="C:plasma membrane"/>
    <property type="evidence" value="ECO:0000314"/>
    <property type="project" value="CGD"/>
</dbReference>
<dbReference type="GO" id="GO:0098552">
    <property type="term" value="C:side of membrane"/>
    <property type="evidence" value="ECO:0007669"/>
    <property type="project" value="UniProtKB-KW"/>
</dbReference>
<dbReference type="GO" id="GO:0030445">
    <property type="term" value="C:yeast-form cell wall"/>
    <property type="evidence" value="ECO:0000314"/>
    <property type="project" value="CGD"/>
</dbReference>
<dbReference type="GO" id="GO:0042124">
    <property type="term" value="F:1,3-beta-glucanosyltransferase activity"/>
    <property type="evidence" value="ECO:0000247"/>
    <property type="project" value="CGD"/>
</dbReference>
<dbReference type="GO" id="GO:0042123">
    <property type="term" value="F:glucanosyltransferase activity"/>
    <property type="evidence" value="ECO:0000314"/>
    <property type="project" value="CGD"/>
</dbReference>
<dbReference type="GO" id="GO:0071970">
    <property type="term" value="P:fungal-type cell wall (1-&gt;3)-beta-D-glucan biosynthetic process"/>
    <property type="evidence" value="ECO:0000318"/>
    <property type="project" value="GO_Central"/>
</dbReference>
<dbReference type="GO" id="GO:0031505">
    <property type="term" value="P:fungal-type cell wall organization"/>
    <property type="evidence" value="ECO:0000315"/>
    <property type="project" value="CGD"/>
</dbReference>
<dbReference type="FunFam" id="1.20.58.1040:FF:000005">
    <property type="entry name" value="1,3-beta-glucanosyltransferase"/>
    <property type="match status" value="1"/>
</dbReference>
<dbReference type="FunFam" id="3.20.20.80:FF:000038">
    <property type="entry name" value="1,3-beta-glucanosyltransferase"/>
    <property type="match status" value="1"/>
</dbReference>
<dbReference type="Gene3D" id="1.20.58.1040">
    <property type="match status" value="1"/>
</dbReference>
<dbReference type="Gene3D" id="3.20.20.80">
    <property type="entry name" value="Glycosidases"/>
    <property type="match status" value="1"/>
</dbReference>
<dbReference type="InterPro" id="IPR004886">
    <property type="entry name" value="Glucanosyltransferase"/>
</dbReference>
<dbReference type="InterPro" id="IPR017853">
    <property type="entry name" value="Glycoside_hydrolase_SF"/>
</dbReference>
<dbReference type="InterPro" id="IPR012946">
    <property type="entry name" value="X8"/>
</dbReference>
<dbReference type="PANTHER" id="PTHR31468">
    <property type="entry name" value="1,3-BETA-GLUCANOSYLTRANSFERASE GAS1"/>
    <property type="match status" value="1"/>
</dbReference>
<dbReference type="PANTHER" id="PTHR31468:SF2">
    <property type="entry name" value="1,3-BETA-GLUCANOSYLTRANSFERASE GAS1"/>
    <property type="match status" value="1"/>
</dbReference>
<dbReference type="Pfam" id="PF03198">
    <property type="entry name" value="Glyco_hydro_72"/>
    <property type="match status" value="1"/>
</dbReference>
<dbReference type="Pfam" id="PF07983">
    <property type="entry name" value="X8"/>
    <property type="match status" value="1"/>
</dbReference>
<dbReference type="SMART" id="SM00768">
    <property type="entry name" value="X8"/>
    <property type="match status" value="1"/>
</dbReference>
<dbReference type="SUPFAM" id="SSF51445">
    <property type="entry name" value="(Trans)glycosidases"/>
    <property type="match status" value="1"/>
</dbReference>